<gene>
    <name evidence="6" type="primary">lacA</name>
</gene>
<reference evidence="5 6" key="1">
    <citation type="journal article" date="2010" name="Syst. Appl. Microbiol.">
        <title>Heterologous expression of glycoside hydrolase family 2 and 42 beta-galactosidases of lactic acid bacteria in Lactococcus lactis.</title>
        <authorList>
            <person name="Schwab C."/>
            <person name="Soerensen K.I."/>
            <person name="Gaenzle M.G."/>
        </authorList>
    </citation>
    <scope>NUCLEOTIDE SEQUENCE [GENOMIC DNA]</scope>
    <scope>FUNCTION</scope>
    <scope>CATALYTIC ACTIVITY</scope>
    <scope>BIOPHYSICOCHEMICAL PROPERTIES</scope>
    <scope>SUBSTRATE SPECIFICITY</scope>
    <source>
        <strain evidence="6">FUA3191</strain>
    </source>
</reference>
<keyword id="KW-0326">Glycosidase</keyword>
<keyword id="KW-0378">Hydrolase</keyword>
<keyword id="KW-0479">Metal-binding</keyword>
<keyword id="KW-0862">Zinc</keyword>
<organism>
    <name type="scientific">Lactobacillus acidophilus</name>
    <dbReference type="NCBI Taxonomy" id="1579"/>
    <lineage>
        <taxon>Bacteria</taxon>
        <taxon>Bacillati</taxon>
        <taxon>Bacillota</taxon>
        <taxon>Bacilli</taxon>
        <taxon>Lactobacillales</taxon>
        <taxon>Lactobacillaceae</taxon>
        <taxon>Lactobacillus</taxon>
    </lineage>
</organism>
<accession>C6H178</accession>
<proteinExistence type="evidence at protein level"/>
<protein>
    <recommendedName>
        <fullName>Beta-galactosidase LacA</fullName>
        <shortName evidence="2">Beta-gal</shortName>
        <ecNumber>3.2.1.23</ecNumber>
    </recommendedName>
</protein>
<feature type="chain" id="PRO_0000407691" description="Beta-galactosidase LacA">
    <location>
        <begin position="1"/>
        <end position="667"/>
    </location>
</feature>
<feature type="active site" description="Proton donor" evidence="1">
    <location>
        <position position="148"/>
    </location>
</feature>
<feature type="active site" description="Nucleophile" evidence="1">
    <location>
        <position position="307"/>
    </location>
</feature>
<feature type="binding site" evidence="1">
    <location>
        <position position="109"/>
    </location>
    <ligand>
        <name>substrate</name>
    </ligand>
</feature>
<feature type="binding site" evidence="1">
    <location>
        <position position="113"/>
    </location>
    <ligand>
        <name>Zn(2+)</name>
        <dbReference type="ChEBI" id="CHEBI:29105"/>
    </ligand>
</feature>
<feature type="binding site" evidence="1">
    <location>
        <position position="147"/>
    </location>
    <ligand>
        <name>substrate</name>
    </ligand>
</feature>
<feature type="binding site" evidence="1">
    <location>
        <position position="153"/>
    </location>
    <ligand>
        <name>Zn(2+)</name>
        <dbReference type="ChEBI" id="CHEBI:29105"/>
    </ligand>
</feature>
<feature type="binding site" evidence="1">
    <location>
        <position position="155"/>
    </location>
    <ligand>
        <name>Zn(2+)</name>
        <dbReference type="ChEBI" id="CHEBI:29105"/>
    </ligand>
</feature>
<feature type="binding site" evidence="1">
    <location>
        <position position="158"/>
    </location>
    <ligand>
        <name>Zn(2+)</name>
        <dbReference type="ChEBI" id="CHEBI:29105"/>
    </ligand>
</feature>
<feature type="binding site" evidence="1">
    <location>
        <position position="315"/>
    </location>
    <ligand>
        <name>substrate</name>
    </ligand>
</feature>
<feature type="binding site" evidence="1">
    <location>
        <begin position="355"/>
        <end position="358"/>
    </location>
    <ligand>
        <name>substrate</name>
    </ligand>
</feature>
<name>BGAL2_LACAI</name>
<comment type="function">
    <text evidence="4">Hydrolyzes lactose, oNP-galactoside (oNPG), pNP-galactosidase (pNPG), pNP-mannoside, pNP-glucoside, pNP-fucoside, pNP-N-acetylglucosamide, but not pNP-arabinoside or 4-methylumbelliferyl-beta-galactopyranoside (MUG). Transgalactosylates lactose at 10 g/L, but not at 270 g/L.</text>
</comment>
<comment type="catalytic activity">
    <reaction evidence="4">
        <text>Hydrolysis of terminal non-reducing beta-D-galactose residues in beta-D-galactosides.</text>
        <dbReference type="EC" id="3.2.1.23"/>
    </reaction>
</comment>
<comment type="biophysicochemical properties">
    <phDependence>
        <text evidence="4">Hydrolyzes lactose at pH 6.5, 6.8 and 7.2.</text>
    </phDependence>
    <temperatureDependence>
        <text evidence="4">Hydrolyzes lactose between 30-45 degrees Celsius.</text>
    </temperatureDependence>
</comment>
<comment type="similarity">
    <text evidence="3">Belongs to the glycosyl hydrolase 42 family.</text>
</comment>
<dbReference type="EC" id="3.2.1.23"/>
<dbReference type="EMBL" id="FN424352">
    <property type="protein sequence ID" value="CAZ66938.1"/>
    <property type="molecule type" value="Genomic_DNA"/>
</dbReference>
<dbReference type="SMR" id="C6H178"/>
<dbReference type="CAZy" id="GH42">
    <property type="family name" value="Glycoside Hydrolase Family 42"/>
</dbReference>
<dbReference type="GO" id="GO:0009341">
    <property type="term" value="C:beta-galactosidase complex"/>
    <property type="evidence" value="ECO:0007669"/>
    <property type="project" value="InterPro"/>
</dbReference>
<dbReference type="GO" id="GO:0004565">
    <property type="term" value="F:beta-galactosidase activity"/>
    <property type="evidence" value="ECO:0007669"/>
    <property type="project" value="UniProtKB-EC"/>
</dbReference>
<dbReference type="GO" id="GO:0046872">
    <property type="term" value="F:metal ion binding"/>
    <property type="evidence" value="ECO:0007669"/>
    <property type="project" value="UniProtKB-KW"/>
</dbReference>
<dbReference type="GO" id="GO:0006012">
    <property type="term" value="P:galactose metabolic process"/>
    <property type="evidence" value="ECO:0007669"/>
    <property type="project" value="InterPro"/>
</dbReference>
<dbReference type="CDD" id="cd03143">
    <property type="entry name" value="A4_beta-galactosidase_middle_domain"/>
    <property type="match status" value="1"/>
</dbReference>
<dbReference type="Gene3D" id="3.40.50.880">
    <property type="match status" value="1"/>
</dbReference>
<dbReference type="Gene3D" id="3.20.20.80">
    <property type="entry name" value="Glycosidases"/>
    <property type="match status" value="1"/>
</dbReference>
<dbReference type="Gene3D" id="2.60.40.1180">
    <property type="entry name" value="Golgi alpha-mannosidase II"/>
    <property type="match status" value="1"/>
</dbReference>
<dbReference type="InterPro" id="IPR013739">
    <property type="entry name" value="Beta_galactosidase_C"/>
</dbReference>
<dbReference type="InterPro" id="IPR013738">
    <property type="entry name" value="Beta_galactosidase_Trimer"/>
</dbReference>
<dbReference type="InterPro" id="IPR029062">
    <property type="entry name" value="Class_I_gatase-like"/>
</dbReference>
<dbReference type="InterPro" id="IPR003476">
    <property type="entry name" value="Glyco_hydro_42"/>
</dbReference>
<dbReference type="InterPro" id="IPR013529">
    <property type="entry name" value="Glyco_hydro_42_N"/>
</dbReference>
<dbReference type="InterPro" id="IPR013780">
    <property type="entry name" value="Glyco_hydro_b"/>
</dbReference>
<dbReference type="InterPro" id="IPR017853">
    <property type="entry name" value="Glycoside_hydrolase_SF"/>
</dbReference>
<dbReference type="PANTHER" id="PTHR36447">
    <property type="entry name" value="BETA-GALACTOSIDASE GANA"/>
    <property type="match status" value="1"/>
</dbReference>
<dbReference type="PANTHER" id="PTHR36447:SF1">
    <property type="entry name" value="BETA-GALACTOSIDASE GANA"/>
    <property type="match status" value="1"/>
</dbReference>
<dbReference type="Pfam" id="PF02449">
    <property type="entry name" value="Glyco_hydro_42"/>
    <property type="match status" value="1"/>
</dbReference>
<dbReference type="Pfam" id="PF08533">
    <property type="entry name" value="Glyco_hydro_42C"/>
    <property type="match status" value="1"/>
</dbReference>
<dbReference type="Pfam" id="PF08532">
    <property type="entry name" value="Glyco_hydro_42M"/>
    <property type="match status" value="1"/>
</dbReference>
<dbReference type="PIRSF" id="PIRSF001084">
    <property type="entry name" value="B-galactosidase"/>
    <property type="match status" value="1"/>
</dbReference>
<dbReference type="SUPFAM" id="SSF51445">
    <property type="entry name" value="(Trans)glycosidases"/>
    <property type="match status" value="1"/>
</dbReference>
<dbReference type="SUPFAM" id="SSF52317">
    <property type="entry name" value="Class I glutamine amidotransferase-like"/>
    <property type="match status" value="1"/>
</dbReference>
<evidence type="ECO:0000250" key="1">
    <source>
        <dbReference type="UniProtKB" id="O69315"/>
    </source>
</evidence>
<evidence type="ECO:0000250" key="2">
    <source>
        <dbReference type="UniProtKB" id="Q5FJ41"/>
    </source>
</evidence>
<evidence type="ECO:0000255" key="3"/>
<evidence type="ECO:0000269" key="4">
    <source>
    </source>
</evidence>
<evidence type="ECO:0000305" key="5"/>
<evidence type="ECO:0000312" key="6">
    <source>
        <dbReference type="EMBL" id="CAZ66938.1"/>
    </source>
</evidence>
<sequence length="667" mass="76705">MTQLSRFLYGGDYNPDQWPEETWSKDIHVFKKADINSATINIFSWALLEPREGKYNFSKLDKVVQQLSDANFDIVMGTATAAMPAWMFKKYPDIARVDYQDRRHVFGQRHNFCPNSSNYQRLAGELEKQLVERYKDNKHIVFWHINNEYGGNCYCENCQNAFKKWLKNKYKTVEGLNKAWNMNVWSHTIYDWDEIVVPNELGDVWGIKGSETIVAGLSIDYLRFQSESMQNLFKMEKKIIKKFDPETPVTTNFHGLPNKMVDYQKWAKGQDIISYDSYPTYDAPAYKAAFLYDLMRSLKHQPFMLMESAPSQVNWQPYSPLKRPGQMEATEFQAVAHGADTVQFFRLKQAVGGSEKFHSAVIAHSQRTVTRVFKELADLGKKLKNAGPTILGSKTKARFAIVFDWSNFWSYEYVDGITQDLNYVDSILDYYRQFYERNIPTDIIGVDDDFSNYDLVVAPVLYMVKHGLDKKINDYVENGGNFVTTYMSGMVNSSDNVYLGGYPGPLKEVTGIWVEESDAVVPGQKIKVLMNGKDYDTGLICNLIHPNDAKILATYASEFYAGTPAVTENQYGKGRAWYIGTRLEHQGLTQLFNHIIFETGVESLVCDSHKLEITKRVTEDGKELYFVLNMSNEERTLPSKFTGYEDILTGEKAHKDMKGWDVQVLRN</sequence>